<gene>
    <name evidence="1" type="primary">fusA</name>
    <name type="ordered locus">HY04AAS1_0262</name>
</gene>
<feature type="chain" id="PRO_1000091723" description="Elongation factor G">
    <location>
        <begin position="1"/>
        <end position="692"/>
    </location>
</feature>
<feature type="domain" description="tr-type G">
    <location>
        <begin position="8"/>
        <end position="283"/>
    </location>
</feature>
<feature type="binding site" evidence="1">
    <location>
        <begin position="17"/>
        <end position="24"/>
    </location>
    <ligand>
        <name>GTP</name>
        <dbReference type="ChEBI" id="CHEBI:37565"/>
    </ligand>
</feature>
<feature type="binding site" evidence="1">
    <location>
        <begin position="81"/>
        <end position="85"/>
    </location>
    <ligand>
        <name>GTP</name>
        <dbReference type="ChEBI" id="CHEBI:37565"/>
    </ligand>
</feature>
<feature type="binding site" evidence="1">
    <location>
        <begin position="135"/>
        <end position="138"/>
    </location>
    <ligand>
        <name>GTP</name>
        <dbReference type="ChEBI" id="CHEBI:37565"/>
    </ligand>
</feature>
<reference key="1">
    <citation type="journal article" date="2009" name="J. Bacteriol.">
        <title>Complete and draft genome sequences of six members of the Aquificales.</title>
        <authorList>
            <person name="Reysenbach A.-L."/>
            <person name="Hamamura N."/>
            <person name="Podar M."/>
            <person name="Griffiths E."/>
            <person name="Ferreira S."/>
            <person name="Hochstein R."/>
            <person name="Heidelberg J."/>
            <person name="Johnson J."/>
            <person name="Mead D."/>
            <person name="Pohorille A."/>
            <person name="Sarmiento M."/>
            <person name="Schweighofer K."/>
            <person name="Seshadri R."/>
            <person name="Voytek M.A."/>
        </authorList>
    </citation>
    <scope>NUCLEOTIDE SEQUENCE [LARGE SCALE GENOMIC DNA]</scope>
    <source>
        <strain>Y04AAS1</strain>
    </source>
</reference>
<protein>
    <recommendedName>
        <fullName evidence="1">Elongation factor G</fullName>
        <shortName evidence="1">EF-G</shortName>
    </recommendedName>
</protein>
<keyword id="KW-0963">Cytoplasm</keyword>
<keyword id="KW-0251">Elongation factor</keyword>
<keyword id="KW-0342">GTP-binding</keyword>
<keyword id="KW-0547">Nucleotide-binding</keyword>
<keyword id="KW-0648">Protein biosynthesis</keyword>
<dbReference type="EMBL" id="CP001130">
    <property type="protein sequence ID" value="ACG56952.1"/>
    <property type="molecule type" value="Genomic_DNA"/>
</dbReference>
<dbReference type="RefSeq" id="WP_012513309.1">
    <property type="nucleotide sequence ID" value="NC_011126.1"/>
</dbReference>
<dbReference type="SMR" id="B4U741"/>
<dbReference type="STRING" id="380749.HY04AAS1_0262"/>
<dbReference type="KEGG" id="hya:HY04AAS1_0262"/>
<dbReference type="eggNOG" id="COG0480">
    <property type="taxonomic scope" value="Bacteria"/>
</dbReference>
<dbReference type="HOGENOM" id="CLU_002794_4_1_0"/>
<dbReference type="OrthoDB" id="9804431at2"/>
<dbReference type="GO" id="GO:0005737">
    <property type="term" value="C:cytoplasm"/>
    <property type="evidence" value="ECO:0007669"/>
    <property type="project" value="UniProtKB-SubCell"/>
</dbReference>
<dbReference type="GO" id="GO:0005525">
    <property type="term" value="F:GTP binding"/>
    <property type="evidence" value="ECO:0007669"/>
    <property type="project" value="UniProtKB-UniRule"/>
</dbReference>
<dbReference type="GO" id="GO:0003924">
    <property type="term" value="F:GTPase activity"/>
    <property type="evidence" value="ECO:0007669"/>
    <property type="project" value="InterPro"/>
</dbReference>
<dbReference type="GO" id="GO:0003746">
    <property type="term" value="F:translation elongation factor activity"/>
    <property type="evidence" value="ECO:0007669"/>
    <property type="project" value="UniProtKB-UniRule"/>
</dbReference>
<dbReference type="GO" id="GO:0032790">
    <property type="term" value="P:ribosome disassembly"/>
    <property type="evidence" value="ECO:0007669"/>
    <property type="project" value="TreeGrafter"/>
</dbReference>
<dbReference type="CDD" id="cd01886">
    <property type="entry name" value="EF-G"/>
    <property type="match status" value="1"/>
</dbReference>
<dbReference type="CDD" id="cd16262">
    <property type="entry name" value="EFG_III"/>
    <property type="match status" value="1"/>
</dbReference>
<dbReference type="CDD" id="cd01434">
    <property type="entry name" value="EFG_mtEFG1_IV"/>
    <property type="match status" value="1"/>
</dbReference>
<dbReference type="CDD" id="cd03713">
    <property type="entry name" value="EFG_mtEFG_C"/>
    <property type="match status" value="1"/>
</dbReference>
<dbReference type="CDD" id="cd04088">
    <property type="entry name" value="EFG_mtEFG_II"/>
    <property type="match status" value="1"/>
</dbReference>
<dbReference type="FunFam" id="2.40.30.10:FF:000006">
    <property type="entry name" value="Elongation factor G"/>
    <property type="match status" value="1"/>
</dbReference>
<dbReference type="FunFam" id="3.30.230.10:FF:000003">
    <property type="entry name" value="Elongation factor G"/>
    <property type="match status" value="1"/>
</dbReference>
<dbReference type="FunFam" id="3.30.70.240:FF:000001">
    <property type="entry name" value="Elongation factor G"/>
    <property type="match status" value="1"/>
</dbReference>
<dbReference type="FunFam" id="3.30.70.870:FF:000001">
    <property type="entry name" value="Elongation factor G"/>
    <property type="match status" value="1"/>
</dbReference>
<dbReference type="FunFam" id="3.40.50.300:FF:000029">
    <property type="entry name" value="Elongation factor G"/>
    <property type="match status" value="1"/>
</dbReference>
<dbReference type="Gene3D" id="3.30.230.10">
    <property type="match status" value="1"/>
</dbReference>
<dbReference type="Gene3D" id="3.30.70.240">
    <property type="match status" value="1"/>
</dbReference>
<dbReference type="Gene3D" id="3.30.70.870">
    <property type="entry name" value="Elongation Factor G (Translational Gtpase), domain 3"/>
    <property type="match status" value="1"/>
</dbReference>
<dbReference type="Gene3D" id="3.40.50.300">
    <property type="entry name" value="P-loop containing nucleotide triphosphate hydrolases"/>
    <property type="match status" value="1"/>
</dbReference>
<dbReference type="Gene3D" id="2.40.30.10">
    <property type="entry name" value="Translation factors"/>
    <property type="match status" value="1"/>
</dbReference>
<dbReference type="HAMAP" id="MF_00054_B">
    <property type="entry name" value="EF_G_EF_2_B"/>
    <property type="match status" value="1"/>
</dbReference>
<dbReference type="InterPro" id="IPR053905">
    <property type="entry name" value="EF-G-like_DII"/>
</dbReference>
<dbReference type="InterPro" id="IPR041095">
    <property type="entry name" value="EFG_II"/>
</dbReference>
<dbReference type="InterPro" id="IPR009022">
    <property type="entry name" value="EFG_III"/>
</dbReference>
<dbReference type="InterPro" id="IPR035647">
    <property type="entry name" value="EFG_III/V"/>
</dbReference>
<dbReference type="InterPro" id="IPR047872">
    <property type="entry name" value="EFG_IV"/>
</dbReference>
<dbReference type="InterPro" id="IPR035649">
    <property type="entry name" value="EFG_V"/>
</dbReference>
<dbReference type="InterPro" id="IPR000640">
    <property type="entry name" value="EFG_V-like"/>
</dbReference>
<dbReference type="InterPro" id="IPR031157">
    <property type="entry name" value="G_TR_CS"/>
</dbReference>
<dbReference type="InterPro" id="IPR027417">
    <property type="entry name" value="P-loop_NTPase"/>
</dbReference>
<dbReference type="InterPro" id="IPR020568">
    <property type="entry name" value="Ribosomal_Su5_D2-typ_SF"/>
</dbReference>
<dbReference type="InterPro" id="IPR014721">
    <property type="entry name" value="Ribsml_uS5_D2-typ_fold_subgr"/>
</dbReference>
<dbReference type="InterPro" id="IPR005225">
    <property type="entry name" value="Small_GTP-bd"/>
</dbReference>
<dbReference type="InterPro" id="IPR000795">
    <property type="entry name" value="T_Tr_GTP-bd_dom"/>
</dbReference>
<dbReference type="InterPro" id="IPR009000">
    <property type="entry name" value="Transl_B-barrel_sf"/>
</dbReference>
<dbReference type="InterPro" id="IPR004540">
    <property type="entry name" value="Transl_elong_EFG/EF2"/>
</dbReference>
<dbReference type="InterPro" id="IPR005517">
    <property type="entry name" value="Transl_elong_EFG/EF2_IV"/>
</dbReference>
<dbReference type="NCBIfam" id="TIGR00484">
    <property type="entry name" value="EF-G"/>
    <property type="match status" value="1"/>
</dbReference>
<dbReference type="NCBIfam" id="NF009379">
    <property type="entry name" value="PRK12740.1-3"/>
    <property type="match status" value="1"/>
</dbReference>
<dbReference type="NCBIfam" id="NF009381">
    <property type="entry name" value="PRK12740.1-5"/>
    <property type="match status" value="1"/>
</dbReference>
<dbReference type="NCBIfam" id="NF009891">
    <property type="entry name" value="PRK13351.1-1"/>
    <property type="match status" value="1"/>
</dbReference>
<dbReference type="NCBIfam" id="TIGR00231">
    <property type="entry name" value="small_GTP"/>
    <property type="match status" value="1"/>
</dbReference>
<dbReference type="PANTHER" id="PTHR43261:SF1">
    <property type="entry name" value="RIBOSOME-RELEASING FACTOR 2, MITOCHONDRIAL"/>
    <property type="match status" value="1"/>
</dbReference>
<dbReference type="PANTHER" id="PTHR43261">
    <property type="entry name" value="TRANSLATION ELONGATION FACTOR G-RELATED"/>
    <property type="match status" value="1"/>
</dbReference>
<dbReference type="Pfam" id="PF22042">
    <property type="entry name" value="EF-G_D2"/>
    <property type="match status" value="1"/>
</dbReference>
<dbReference type="Pfam" id="PF00679">
    <property type="entry name" value="EFG_C"/>
    <property type="match status" value="1"/>
</dbReference>
<dbReference type="Pfam" id="PF14492">
    <property type="entry name" value="EFG_III"/>
    <property type="match status" value="1"/>
</dbReference>
<dbReference type="Pfam" id="PF03764">
    <property type="entry name" value="EFG_IV"/>
    <property type="match status" value="1"/>
</dbReference>
<dbReference type="Pfam" id="PF00009">
    <property type="entry name" value="GTP_EFTU"/>
    <property type="match status" value="1"/>
</dbReference>
<dbReference type="PRINTS" id="PR00315">
    <property type="entry name" value="ELONGATNFCT"/>
</dbReference>
<dbReference type="SMART" id="SM00838">
    <property type="entry name" value="EFG_C"/>
    <property type="match status" value="1"/>
</dbReference>
<dbReference type="SMART" id="SM00889">
    <property type="entry name" value="EFG_IV"/>
    <property type="match status" value="1"/>
</dbReference>
<dbReference type="SUPFAM" id="SSF54980">
    <property type="entry name" value="EF-G C-terminal domain-like"/>
    <property type="match status" value="2"/>
</dbReference>
<dbReference type="SUPFAM" id="SSF52540">
    <property type="entry name" value="P-loop containing nucleoside triphosphate hydrolases"/>
    <property type="match status" value="1"/>
</dbReference>
<dbReference type="SUPFAM" id="SSF54211">
    <property type="entry name" value="Ribosomal protein S5 domain 2-like"/>
    <property type="match status" value="1"/>
</dbReference>
<dbReference type="SUPFAM" id="SSF50447">
    <property type="entry name" value="Translation proteins"/>
    <property type="match status" value="1"/>
</dbReference>
<dbReference type="PROSITE" id="PS00301">
    <property type="entry name" value="G_TR_1"/>
    <property type="match status" value="1"/>
</dbReference>
<dbReference type="PROSITE" id="PS51722">
    <property type="entry name" value="G_TR_2"/>
    <property type="match status" value="1"/>
</dbReference>
<name>EFG_HYDS0</name>
<comment type="function">
    <text evidence="1">Catalyzes the GTP-dependent ribosomal translocation step during translation elongation. During this step, the ribosome changes from the pre-translocational (PRE) to the post-translocational (POST) state as the newly formed A-site-bound peptidyl-tRNA and P-site-bound deacylated tRNA move to the P and E sites, respectively. Catalyzes the coordinated movement of the two tRNA molecules, the mRNA and conformational changes in the ribosome.</text>
</comment>
<comment type="subcellular location">
    <subcellularLocation>
        <location evidence="1">Cytoplasm</location>
    </subcellularLocation>
</comment>
<comment type="similarity">
    <text evidence="1">Belongs to the TRAFAC class translation factor GTPase superfamily. Classic translation factor GTPase family. EF-G/EF-2 subfamily.</text>
</comment>
<accession>B4U741</accession>
<sequence>MPRTVPIQDLRNIGIVAHIDAGKTTTTERILYYTGKTYKIGEVHEGAATMDWMPQEKERGITITAATTACYWAGKQINIIDTPGHVDFSVEVVRSMRVLDGIIFIFSAVEGVQPQSEANWRWADKFNVARIAFINKLDRLGADFYRVYDEIVKKLTIKPVAIQIPIGTEDNFVGVVDLMNMNAIIWLEETLGAKYEIRDIPEEYKAKAQEWREKMVESIAETDDTLMEKYLEGQEISTDELKQALRKATINKQLVPVLCGSSFKNKGVQPLLDAVVDYLPSPLDVPSVVGINPKTVQEETRLPEDDQPFCAYIFKVVSDPYAGQLSYFRVFSGKVQAGSYVLNSTKDKKERVGRLLLMHANTREDITEVAAGEIAAAVGVDAATGDTICDEKSPIILEKLEFPEPVISMAIEPKTKKDQEKLSQVLNKFMKEDPTFKASMDPETGQTLIHGMGELHLEIMVDRMKREYNIEVNVGKPQVAYKEAIKGKAVAEGKFIRQTGGRGQYGHVVIEVEPLERGSGFVFENAIVGGVIPKEFIPPVEEGIKEAMENGVLAGYPVVDVKVKLFDGSYHEVDSSEIAFKIAGSMAFKEAAKKASVVLLEPIMEVEVETPDDYVGDVIGDLNSRRGKIMGMENKGIITSIKAHVPLSEMFGYATNLRSLTQGRGTFIMKFSHYSEAPQSITEKVVGERTHT</sequence>
<organism>
    <name type="scientific">Hydrogenobaculum sp. (strain Y04AAS1)</name>
    <dbReference type="NCBI Taxonomy" id="380749"/>
    <lineage>
        <taxon>Bacteria</taxon>
        <taxon>Pseudomonadati</taxon>
        <taxon>Aquificota</taxon>
        <taxon>Aquificia</taxon>
        <taxon>Aquificales</taxon>
        <taxon>Aquificaceae</taxon>
        <taxon>Hydrogenobaculum</taxon>
    </lineage>
</organism>
<proteinExistence type="inferred from homology"/>
<evidence type="ECO:0000255" key="1">
    <source>
        <dbReference type="HAMAP-Rule" id="MF_00054"/>
    </source>
</evidence>